<feature type="chain" id="PRO_0000268274" description="Bifunctional protein FolD">
    <location>
        <begin position="1"/>
        <end position="293"/>
    </location>
</feature>
<feature type="binding site" evidence="1">
    <location>
        <begin position="164"/>
        <end position="166"/>
    </location>
    <ligand>
        <name>NADP(+)</name>
        <dbReference type="ChEBI" id="CHEBI:58349"/>
    </ligand>
</feature>
<feature type="binding site" evidence="1">
    <location>
        <position position="193"/>
    </location>
    <ligand>
        <name>NADP(+)</name>
        <dbReference type="ChEBI" id="CHEBI:58349"/>
    </ligand>
</feature>
<feature type="binding site" evidence="1">
    <location>
        <position position="234"/>
    </location>
    <ligand>
        <name>NADP(+)</name>
        <dbReference type="ChEBI" id="CHEBI:58349"/>
    </ligand>
</feature>
<evidence type="ECO:0000255" key="1">
    <source>
        <dbReference type="HAMAP-Rule" id="MF_01576"/>
    </source>
</evidence>
<reference key="1">
    <citation type="journal article" date="2005" name="Science">
        <title>Extensive DNA inversions in the B. fragilis genome control variable gene expression.</title>
        <authorList>
            <person name="Cerdeno-Tarraga A.-M."/>
            <person name="Patrick S."/>
            <person name="Crossman L.C."/>
            <person name="Blakely G."/>
            <person name="Abratt V."/>
            <person name="Lennard N."/>
            <person name="Poxton I."/>
            <person name="Duerden B."/>
            <person name="Harris B."/>
            <person name="Quail M.A."/>
            <person name="Barron A."/>
            <person name="Clark L."/>
            <person name="Corton C."/>
            <person name="Doggett J."/>
            <person name="Holden M.T.G."/>
            <person name="Larke N."/>
            <person name="Line A."/>
            <person name="Lord A."/>
            <person name="Norbertczak H."/>
            <person name="Ormond D."/>
            <person name="Price C."/>
            <person name="Rabbinowitsch E."/>
            <person name="Woodward J."/>
            <person name="Barrell B.G."/>
            <person name="Parkhill J."/>
        </authorList>
    </citation>
    <scope>NUCLEOTIDE SEQUENCE [LARGE SCALE GENOMIC DNA]</scope>
    <source>
        <strain>ATCC 25285 / DSM 2151 / CCUG 4856 / JCM 11019 / LMG 10263 / NCTC 9343 / Onslow / VPI 2553 / EN-2</strain>
    </source>
</reference>
<name>FOLD_BACFN</name>
<keyword id="KW-0028">Amino-acid biosynthesis</keyword>
<keyword id="KW-0368">Histidine biosynthesis</keyword>
<keyword id="KW-0378">Hydrolase</keyword>
<keyword id="KW-0486">Methionine biosynthesis</keyword>
<keyword id="KW-0511">Multifunctional enzyme</keyword>
<keyword id="KW-0521">NADP</keyword>
<keyword id="KW-0554">One-carbon metabolism</keyword>
<keyword id="KW-0560">Oxidoreductase</keyword>
<keyword id="KW-0658">Purine biosynthesis</keyword>
<protein>
    <recommendedName>
        <fullName evidence="1">Bifunctional protein FolD</fullName>
    </recommendedName>
    <domain>
        <recommendedName>
            <fullName evidence="1">Methylenetetrahydrofolate dehydrogenase</fullName>
            <ecNumber evidence="1">1.5.1.5</ecNumber>
        </recommendedName>
    </domain>
    <domain>
        <recommendedName>
            <fullName evidence="1">Methenyltetrahydrofolate cyclohydrolase</fullName>
            <ecNumber evidence="1">3.5.4.9</ecNumber>
        </recommendedName>
    </domain>
</protein>
<accession>Q5LAX0</accession>
<sequence length="293" mass="31625">MTLIDGKAISEQVKQEIAAEVAEIVAHGGKRPHLAAILVGHDGGSETYVAAKVKACEVCGFKSSLIRYESDVTEDELLAKVRELNEDDDVDGFIVQLPLPKHISEQKVIETIDYRKDVDGFHPINVGRMSIGLPCYVSATPNGILELLKRYRIETSGKKCVVLGRSNIVGKPMAALMMQKAYPGDATVTVCHSRSKDLVKECREADIIIAALGQPNFVKAEMVKEGAVVIDVGTTRVPDASKKSGFKLTGDVKFDEVSPKCSFITPVPGGVGPMTIVSLMKNTLLAGKKAIYQ</sequence>
<comment type="function">
    <text evidence="1">Catalyzes the oxidation of 5,10-methylenetetrahydrofolate to 5,10-methenyltetrahydrofolate and then the hydrolysis of 5,10-methenyltetrahydrofolate to 10-formyltetrahydrofolate.</text>
</comment>
<comment type="catalytic activity">
    <reaction evidence="1">
        <text>(6R)-5,10-methylene-5,6,7,8-tetrahydrofolate + NADP(+) = (6R)-5,10-methenyltetrahydrofolate + NADPH</text>
        <dbReference type="Rhea" id="RHEA:22812"/>
        <dbReference type="ChEBI" id="CHEBI:15636"/>
        <dbReference type="ChEBI" id="CHEBI:57455"/>
        <dbReference type="ChEBI" id="CHEBI:57783"/>
        <dbReference type="ChEBI" id="CHEBI:58349"/>
        <dbReference type="EC" id="1.5.1.5"/>
    </reaction>
</comment>
<comment type="catalytic activity">
    <reaction evidence="1">
        <text>(6R)-5,10-methenyltetrahydrofolate + H2O = (6R)-10-formyltetrahydrofolate + H(+)</text>
        <dbReference type="Rhea" id="RHEA:23700"/>
        <dbReference type="ChEBI" id="CHEBI:15377"/>
        <dbReference type="ChEBI" id="CHEBI:15378"/>
        <dbReference type="ChEBI" id="CHEBI:57455"/>
        <dbReference type="ChEBI" id="CHEBI:195366"/>
        <dbReference type="EC" id="3.5.4.9"/>
    </reaction>
</comment>
<comment type="pathway">
    <text evidence="1">One-carbon metabolism; tetrahydrofolate interconversion.</text>
</comment>
<comment type="subunit">
    <text evidence="1">Homodimer.</text>
</comment>
<comment type="similarity">
    <text evidence="1">Belongs to the tetrahydrofolate dehydrogenase/cyclohydrolase family.</text>
</comment>
<organism>
    <name type="scientific">Bacteroides fragilis (strain ATCC 25285 / DSM 2151 / CCUG 4856 / JCM 11019 / LMG 10263 / NCTC 9343 / Onslow / VPI 2553 / EN-2)</name>
    <dbReference type="NCBI Taxonomy" id="272559"/>
    <lineage>
        <taxon>Bacteria</taxon>
        <taxon>Pseudomonadati</taxon>
        <taxon>Bacteroidota</taxon>
        <taxon>Bacteroidia</taxon>
        <taxon>Bacteroidales</taxon>
        <taxon>Bacteroidaceae</taxon>
        <taxon>Bacteroides</taxon>
    </lineage>
</organism>
<dbReference type="EC" id="1.5.1.5" evidence="1"/>
<dbReference type="EC" id="3.5.4.9" evidence="1"/>
<dbReference type="EMBL" id="CR626927">
    <property type="protein sequence ID" value="CAH08753.1"/>
    <property type="molecule type" value="Genomic_DNA"/>
</dbReference>
<dbReference type="RefSeq" id="WP_005780414.1">
    <property type="nucleotide sequence ID" value="NZ_UFTH01000001.1"/>
</dbReference>
<dbReference type="SMR" id="Q5LAX0"/>
<dbReference type="PaxDb" id="272559-BF9343_2972"/>
<dbReference type="GeneID" id="60367697"/>
<dbReference type="KEGG" id="bfs:BF9343_2972"/>
<dbReference type="eggNOG" id="COG0190">
    <property type="taxonomic scope" value="Bacteria"/>
</dbReference>
<dbReference type="HOGENOM" id="CLU_034045_2_1_10"/>
<dbReference type="UniPathway" id="UPA00193"/>
<dbReference type="Proteomes" id="UP000006731">
    <property type="component" value="Chromosome"/>
</dbReference>
<dbReference type="GO" id="GO:0005829">
    <property type="term" value="C:cytosol"/>
    <property type="evidence" value="ECO:0007669"/>
    <property type="project" value="TreeGrafter"/>
</dbReference>
<dbReference type="GO" id="GO:0004477">
    <property type="term" value="F:methenyltetrahydrofolate cyclohydrolase activity"/>
    <property type="evidence" value="ECO:0007669"/>
    <property type="project" value="UniProtKB-UniRule"/>
</dbReference>
<dbReference type="GO" id="GO:0004488">
    <property type="term" value="F:methylenetetrahydrofolate dehydrogenase (NADP+) activity"/>
    <property type="evidence" value="ECO:0007669"/>
    <property type="project" value="UniProtKB-UniRule"/>
</dbReference>
<dbReference type="GO" id="GO:0000105">
    <property type="term" value="P:L-histidine biosynthetic process"/>
    <property type="evidence" value="ECO:0007669"/>
    <property type="project" value="UniProtKB-KW"/>
</dbReference>
<dbReference type="GO" id="GO:0009086">
    <property type="term" value="P:methionine biosynthetic process"/>
    <property type="evidence" value="ECO:0007669"/>
    <property type="project" value="UniProtKB-KW"/>
</dbReference>
<dbReference type="GO" id="GO:0006164">
    <property type="term" value="P:purine nucleotide biosynthetic process"/>
    <property type="evidence" value="ECO:0007669"/>
    <property type="project" value="UniProtKB-KW"/>
</dbReference>
<dbReference type="GO" id="GO:0035999">
    <property type="term" value="P:tetrahydrofolate interconversion"/>
    <property type="evidence" value="ECO:0007669"/>
    <property type="project" value="UniProtKB-UniRule"/>
</dbReference>
<dbReference type="CDD" id="cd01080">
    <property type="entry name" value="NAD_bind_m-THF_DH_Cyclohyd"/>
    <property type="match status" value="1"/>
</dbReference>
<dbReference type="FunFam" id="3.40.50.10860:FF:000001">
    <property type="entry name" value="Bifunctional protein FolD"/>
    <property type="match status" value="1"/>
</dbReference>
<dbReference type="FunFam" id="3.40.50.720:FF:000189">
    <property type="entry name" value="Bifunctional protein FolD"/>
    <property type="match status" value="1"/>
</dbReference>
<dbReference type="Gene3D" id="3.40.50.10860">
    <property type="entry name" value="Leucine Dehydrogenase, chain A, domain 1"/>
    <property type="match status" value="1"/>
</dbReference>
<dbReference type="Gene3D" id="3.40.50.720">
    <property type="entry name" value="NAD(P)-binding Rossmann-like Domain"/>
    <property type="match status" value="1"/>
</dbReference>
<dbReference type="HAMAP" id="MF_01576">
    <property type="entry name" value="THF_DHG_CYH"/>
    <property type="match status" value="1"/>
</dbReference>
<dbReference type="InterPro" id="IPR046346">
    <property type="entry name" value="Aminoacid_DH-like_N_sf"/>
</dbReference>
<dbReference type="InterPro" id="IPR036291">
    <property type="entry name" value="NAD(P)-bd_dom_sf"/>
</dbReference>
<dbReference type="InterPro" id="IPR000672">
    <property type="entry name" value="THF_DH/CycHdrlase"/>
</dbReference>
<dbReference type="InterPro" id="IPR020630">
    <property type="entry name" value="THF_DH/CycHdrlase_cat_dom"/>
</dbReference>
<dbReference type="InterPro" id="IPR020867">
    <property type="entry name" value="THF_DH/CycHdrlase_CS"/>
</dbReference>
<dbReference type="InterPro" id="IPR020631">
    <property type="entry name" value="THF_DH/CycHdrlase_NAD-bd_dom"/>
</dbReference>
<dbReference type="NCBIfam" id="NF010782">
    <property type="entry name" value="PRK14185.1"/>
    <property type="match status" value="1"/>
</dbReference>
<dbReference type="PANTHER" id="PTHR48099:SF5">
    <property type="entry name" value="C-1-TETRAHYDROFOLATE SYNTHASE, CYTOPLASMIC"/>
    <property type="match status" value="1"/>
</dbReference>
<dbReference type="PANTHER" id="PTHR48099">
    <property type="entry name" value="C-1-TETRAHYDROFOLATE SYNTHASE, CYTOPLASMIC-RELATED"/>
    <property type="match status" value="1"/>
</dbReference>
<dbReference type="Pfam" id="PF00763">
    <property type="entry name" value="THF_DHG_CYH"/>
    <property type="match status" value="1"/>
</dbReference>
<dbReference type="Pfam" id="PF02882">
    <property type="entry name" value="THF_DHG_CYH_C"/>
    <property type="match status" value="1"/>
</dbReference>
<dbReference type="PRINTS" id="PR00085">
    <property type="entry name" value="THFDHDRGNASE"/>
</dbReference>
<dbReference type="SUPFAM" id="SSF53223">
    <property type="entry name" value="Aminoacid dehydrogenase-like, N-terminal domain"/>
    <property type="match status" value="1"/>
</dbReference>
<dbReference type="SUPFAM" id="SSF51735">
    <property type="entry name" value="NAD(P)-binding Rossmann-fold domains"/>
    <property type="match status" value="1"/>
</dbReference>
<dbReference type="PROSITE" id="PS00766">
    <property type="entry name" value="THF_DHG_CYH_1"/>
    <property type="match status" value="1"/>
</dbReference>
<dbReference type="PROSITE" id="PS00767">
    <property type="entry name" value="THF_DHG_CYH_2"/>
    <property type="match status" value="1"/>
</dbReference>
<gene>
    <name evidence="1" type="primary">folD</name>
    <name type="ordered locus">BF3058</name>
</gene>
<proteinExistence type="inferred from homology"/>